<gene>
    <name evidence="1" type="primary">argC</name>
    <name type="ordered locus">str0464</name>
</gene>
<proteinExistence type="inferred from homology"/>
<reference key="1">
    <citation type="journal article" date="2004" name="Nat. Biotechnol.">
        <title>Complete sequence and comparative genome analysis of the dairy bacterium Streptococcus thermophilus.</title>
        <authorList>
            <person name="Bolotin A."/>
            <person name="Quinquis B."/>
            <person name="Renault P."/>
            <person name="Sorokin A."/>
            <person name="Ehrlich S.D."/>
            <person name="Kulakauskas S."/>
            <person name="Lapidus A."/>
            <person name="Goltsman E."/>
            <person name="Mazur M."/>
            <person name="Pusch G.D."/>
            <person name="Fonstein M."/>
            <person name="Overbeek R."/>
            <person name="Kyprides N."/>
            <person name="Purnelle B."/>
            <person name="Prozzi D."/>
            <person name="Ngui K."/>
            <person name="Masuy D."/>
            <person name="Hancy F."/>
            <person name="Burteau S."/>
            <person name="Boutry M."/>
            <person name="Delcour J."/>
            <person name="Goffeau A."/>
            <person name="Hols P."/>
        </authorList>
    </citation>
    <scope>NUCLEOTIDE SEQUENCE [LARGE SCALE GENOMIC DNA]</scope>
    <source>
        <strain>CNRZ 1066</strain>
    </source>
</reference>
<comment type="function">
    <text evidence="1">Catalyzes the NADPH-dependent reduction of N-acetyl-5-glutamyl phosphate to yield N-acetyl-L-glutamate 5-semialdehyde.</text>
</comment>
<comment type="catalytic activity">
    <reaction evidence="1">
        <text>N-acetyl-L-glutamate 5-semialdehyde + phosphate + NADP(+) = N-acetyl-L-glutamyl 5-phosphate + NADPH + H(+)</text>
        <dbReference type="Rhea" id="RHEA:21588"/>
        <dbReference type="ChEBI" id="CHEBI:15378"/>
        <dbReference type="ChEBI" id="CHEBI:29123"/>
        <dbReference type="ChEBI" id="CHEBI:43474"/>
        <dbReference type="ChEBI" id="CHEBI:57783"/>
        <dbReference type="ChEBI" id="CHEBI:57936"/>
        <dbReference type="ChEBI" id="CHEBI:58349"/>
        <dbReference type="EC" id="1.2.1.38"/>
    </reaction>
</comment>
<comment type="pathway">
    <text evidence="1">Amino-acid biosynthesis; L-arginine biosynthesis; N(2)-acetyl-L-ornithine from L-glutamate: step 3/4.</text>
</comment>
<comment type="subcellular location">
    <subcellularLocation>
        <location evidence="1">Cytoplasm</location>
    </subcellularLocation>
</comment>
<comment type="similarity">
    <text evidence="1">Belongs to the NAGSA dehydrogenase family. Type 1 subfamily.</text>
</comment>
<sequence>MKVSIVGITGYSGLELVKILNNHKKVELVSIHATKEVGRRLSDVYPYLAGVCDLKIEDFDAQEIIEKADLVFFATPSGVASSLAEEFVQADFPIIDLSGDHRLPADVYQEWYKKSPAKKMILNKFTYALSEYTDVKGKKFIANPGCYATATELALIPLVAAGLIETDSIIVDAKSGLTGAGKALSESSHFVNVHDNYMTYKLNHHQHIPEIVQTLQAFDADMPEIQFSTSLLPVNRGIMATVYCKLKKDVAVSDIASAFAKAYDDKPFVRVQENLPELHNVIGSNFTDIGFAYNEKTNVMTVISVIDNLLKGASGQAVQNLNLMQGWDETEGLHMTPSYL</sequence>
<organism>
    <name type="scientific">Streptococcus thermophilus (strain CNRZ 1066)</name>
    <dbReference type="NCBI Taxonomy" id="299768"/>
    <lineage>
        <taxon>Bacteria</taxon>
        <taxon>Bacillati</taxon>
        <taxon>Bacillota</taxon>
        <taxon>Bacilli</taxon>
        <taxon>Lactobacillales</taxon>
        <taxon>Streptococcaceae</taxon>
        <taxon>Streptococcus</taxon>
    </lineage>
</organism>
<evidence type="ECO:0000255" key="1">
    <source>
        <dbReference type="HAMAP-Rule" id="MF_00150"/>
    </source>
</evidence>
<protein>
    <recommendedName>
        <fullName evidence="1">N-acetyl-gamma-glutamyl-phosphate reductase</fullName>
        <shortName evidence="1">AGPR</shortName>
        <ecNumber evidence="1">1.2.1.38</ecNumber>
    </recommendedName>
    <alternativeName>
        <fullName evidence="1">N-acetyl-glutamate semialdehyde dehydrogenase</fullName>
        <shortName evidence="1">NAGSA dehydrogenase</shortName>
    </alternativeName>
</protein>
<keyword id="KW-0028">Amino-acid biosynthesis</keyword>
<keyword id="KW-0055">Arginine biosynthesis</keyword>
<keyword id="KW-0963">Cytoplasm</keyword>
<keyword id="KW-0521">NADP</keyword>
<keyword id="KW-0560">Oxidoreductase</keyword>
<accession>Q5M123</accession>
<dbReference type="EC" id="1.2.1.38" evidence="1"/>
<dbReference type="EMBL" id="CP000024">
    <property type="protein sequence ID" value="AAV62064.1"/>
    <property type="molecule type" value="Genomic_DNA"/>
</dbReference>
<dbReference type="RefSeq" id="WP_011225581.1">
    <property type="nucleotide sequence ID" value="NC_006449.1"/>
</dbReference>
<dbReference type="SMR" id="Q5M123"/>
<dbReference type="GeneID" id="66898375"/>
<dbReference type="KEGG" id="stc:str0464"/>
<dbReference type="HOGENOM" id="CLU_006384_0_1_9"/>
<dbReference type="UniPathway" id="UPA00068">
    <property type="reaction ID" value="UER00108"/>
</dbReference>
<dbReference type="GO" id="GO:0005737">
    <property type="term" value="C:cytoplasm"/>
    <property type="evidence" value="ECO:0007669"/>
    <property type="project" value="UniProtKB-SubCell"/>
</dbReference>
<dbReference type="GO" id="GO:0003942">
    <property type="term" value="F:N-acetyl-gamma-glutamyl-phosphate reductase activity"/>
    <property type="evidence" value="ECO:0007669"/>
    <property type="project" value="UniProtKB-UniRule"/>
</dbReference>
<dbReference type="GO" id="GO:0051287">
    <property type="term" value="F:NAD binding"/>
    <property type="evidence" value="ECO:0007669"/>
    <property type="project" value="InterPro"/>
</dbReference>
<dbReference type="GO" id="GO:0070401">
    <property type="term" value="F:NADP+ binding"/>
    <property type="evidence" value="ECO:0007669"/>
    <property type="project" value="InterPro"/>
</dbReference>
<dbReference type="GO" id="GO:0006526">
    <property type="term" value="P:L-arginine biosynthetic process"/>
    <property type="evidence" value="ECO:0007669"/>
    <property type="project" value="UniProtKB-UniRule"/>
</dbReference>
<dbReference type="CDD" id="cd23934">
    <property type="entry name" value="AGPR_1_C"/>
    <property type="match status" value="1"/>
</dbReference>
<dbReference type="CDD" id="cd17895">
    <property type="entry name" value="AGPR_1_N"/>
    <property type="match status" value="1"/>
</dbReference>
<dbReference type="FunFam" id="3.30.360.10:FF:000014">
    <property type="entry name" value="N-acetyl-gamma-glutamyl-phosphate reductase"/>
    <property type="match status" value="1"/>
</dbReference>
<dbReference type="Gene3D" id="3.30.360.10">
    <property type="entry name" value="Dihydrodipicolinate Reductase, domain 2"/>
    <property type="match status" value="1"/>
</dbReference>
<dbReference type="Gene3D" id="3.40.50.720">
    <property type="entry name" value="NAD(P)-binding Rossmann-like Domain"/>
    <property type="match status" value="1"/>
</dbReference>
<dbReference type="HAMAP" id="MF_00150">
    <property type="entry name" value="ArgC_type1"/>
    <property type="match status" value="1"/>
</dbReference>
<dbReference type="InterPro" id="IPR023013">
    <property type="entry name" value="AGPR_AS"/>
</dbReference>
<dbReference type="InterPro" id="IPR000706">
    <property type="entry name" value="AGPR_type-1"/>
</dbReference>
<dbReference type="InterPro" id="IPR036291">
    <property type="entry name" value="NAD(P)-bd_dom_sf"/>
</dbReference>
<dbReference type="InterPro" id="IPR050085">
    <property type="entry name" value="NAGSA_dehydrogenase"/>
</dbReference>
<dbReference type="InterPro" id="IPR000534">
    <property type="entry name" value="Semialdehyde_DH_NAD-bd"/>
</dbReference>
<dbReference type="NCBIfam" id="TIGR01850">
    <property type="entry name" value="argC"/>
    <property type="match status" value="1"/>
</dbReference>
<dbReference type="PANTHER" id="PTHR32338:SF10">
    <property type="entry name" value="N-ACETYL-GAMMA-GLUTAMYL-PHOSPHATE REDUCTASE, CHLOROPLASTIC-RELATED"/>
    <property type="match status" value="1"/>
</dbReference>
<dbReference type="PANTHER" id="PTHR32338">
    <property type="entry name" value="N-ACETYL-GAMMA-GLUTAMYL-PHOSPHATE REDUCTASE, CHLOROPLASTIC-RELATED-RELATED"/>
    <property type="match status" value="1"/>
</dbReference>
<dbReference type="Pfam" id="PF01118">
    <property type="entry name" value="Semialdhyde_dh"/>
    <property type="match status" value="1"/>
</dbReference>
<dbReference type="Pfam" id="PF22698">
    <property type="entry name" value="Semialdhyde_dhC_1"/>
    <property type="match status" value="1"/>
</dbReference>
<dbReference type="SMART" id="SM00859">
    <property type="entry name" value="Semialdhyde_dh"/>
    <property type="match status" value="1"/>
</dbReference>
<dbReference type="SUPFAM" id="SSF55347">
    <property type="entry name" value="Glyceraldehyde-3-phosphate dehydrogenase-like, C-terminal domain"/>
    <property type="match status" value="1"/>
</dbReference>
<dbReference type="SUPFAM" id="SSF51735">
    <property type="entry name" value="NAD(P)-binding Rossmann-fold domains"/>
    <property type="match status" value="1"/>
</dbReference>
<dbReference type="PROSITE" id="PS01224">
    <property type="entry name" value="ARGC"/>
    <property type="match status" value="1"/>
</dbReference>
<feature type="chain" id="PRO_0000112460" description="N-acetyl-gamma-glutamyl-phosphate reductase">
    <location>
        <begin position="1"/>
        <end position="340"/>
    </location>
</feature>
<feature type="active site" evidence="1">
    <location>
        <position position="146"/>
    </location>
</feature>
<name>ARGC_STRT1</name>